<reference key="1">
    <citation type="journal article" date="2006" name="J. Bacteriol.">
        <title>Complete genome sequence of Yersinia pestis strains Antiqua and Nepal516: evidence of gene reduction in an emerging pathogen.</title>
        <authorList>
            <person name="Chain P.S.G."/>
            <person name="Hu P."/>
            <person name="Malfatti S.A."/>
            <person name="Radnedge L."/>
            <person name="Larimer F."/>
            <person name="Vergez L.M."/>
            <person name="Worsham P."/>
            <person name="Chu M.C."/>
            <person name="Andersen G.L."/>
        </authorList>
    </citation>
    <scope>NUCLEOTIDE SEQUENCE [LARGE SCALE GENOMIC DNA]</scope>
    <source>
        <strain>Antiqua</strain>
    </source>
</reference>
<evidence type="ECO:0000255" key="1">
    <source>
        <dbReference type="HAMAP-Rule" id="MF_00822"/>
    </source>
</evidence>
<evidence type="ECO:0000256" key="2">
    <source>
        <dbReference type="SAM" id="MobiDB-lite"/>
    </source>
</evidence>
<accession>Q1C5B2</accession>
<comment type="function">
    <text evidence="1">Involved in urease metallocenter assembly. Binds nickel. Probably functions as a nickel donor during metallocenter assembly.</text>
</comment>
<comment type="subcellular location">
    <subcellularLocation>
        <location evidence="1">Cytoplasm</location>
    </subcellularLocation>
</comment>
<comment type="similarity">
    <text evidence="1">Belongs to the UreE family.</text>
</comment>
<gene>
    <name evidence="1" type="primary">ureE</name>
    <name type="ordered locus">YPA_2395</name>
</gene>
<dbReference type="EMBL" id="CP000308">
    <property type="protein sequence ID" value="ABG14360.1"/>
    <property type="molecule type" value="Genomic_DNA"/>
</dbReference>
<dbReference type="RefSeq" id="WP_002212230.1">
    <property type="nucleotide sequence ID" value="NZ_CP009906.1"/>
</dbReference>
<dbReference type="SMR" id="Q1C5B2"/>
<dbReference type="GeneID" id="57976026"/>
<dbReference type="KEGG" id="ypa:YPA_2395"/>
<dbReference type="Proteomes" id="UP000001971">
    <property type="component" value="Chromosome"/>
</dbReference>
<dbReference type="GO" id="GO:0005737">
    <property type="term" value="C:cytoplasm"/>
    <property type="evidence" value="ECO:0007669"/>
    <property type="project" value="UniProtKB-SubCell"/>
</dbReference>
<dbReference type="GO" id="GO:0016151">
    <property type="term" value="F:nickel cation binding"/>
    <property type="evidence" value="ECO:0007669"/>
    <property type="project" value="UniProtKB-UniRule"/>
</dbReference>
<dbReference type="GO" id="GO:0051082">
    <property type="term" value="F:unfolded protein binding"/>
    <property type="evidence" value="ECO:0007669"/>
    <property type="project" value="UniProtKB-UniRule"/>
</dbReference>
<dbReference type="GO" id="GO:0006457">
    <property type="term" value="P:protein folding"/>
    <property type="evidence" value="ECO:0007669"/>
    <property type="project" value="InterPro"/>
</dbReference>
<dbReference type="CDD" id="cd00571">
    <property type="entry name" value="UreE"/>
    <property type="match status" value="1"/>
</dbReference>
<dbReference type="Gene3D" id="2.60.260.20">
    <property type="entry name" value="Urease metallochaperone UreE, N-terminal domain"/>
    <property type="match status" value="1"/>
</dbReference>
<dbReference type="HAMAP" id="MF_00822">
    <property type="entry name" value="UreE"/>
    <property type="match status" value="1"/>
</dbReference>
<dbReference type="InterPro" id="IPR012406">
    <property type="entry name" value="UreE"/>
</dbReference>
<dbReference type="InterPro" id="IPR004029">
    <property type="entry name" value="UreE_N"/>
</dbReference>
<dbReference type="InterPro" id="IPR036118">
    <property type="entry name" value="UreE_N_sf"/>
</dbReference>
<dbReference type="NCBIfam" id="NF009761">
    <property type="entry name" value="PRK13262.1"/>
    <property type="match status" value="1"/>
</dbReference>
<dbReference type="Pfam" id="PF02814">
    <property type="entry name" value="UreE_N"/>
    <property type="match status" value="1"/>
</dbReference>
<dbReference type="SMART" id="SM00988">
    <property type="entry name" value="UreE_N"/>
    <property type="match status" value="1"/>
</dbReference>
<dbReference type="SUPFAM" id="SSF69287">
    <property type="entry name" value="Urease metallochaperone UreE, N-terminal domain"/>
    <property type="match status" value="1"/>
</dbReference>
<sequence length="231" mass="25948">MILIEHILGNVKKDPVWREKLKDATFDLLILDQREAQKSRCRKSSTQGLDLGISLDRNVVLADGDVLAWDEETNVAVVVQINLRDVMVIDLSELKSRSPDELIKTCFELGHALGNQHWKAVTKHNEVYVPLTVATTMMDSVMRTHGFQHLPFRFVKGAEILPLLTNSEARLLFGGAEDTDTHVHVASPLDEPHGSGLHIHGIHSHEEGHSHGDHDHDHSHSHGDHDHDHKH</sequence>
<name>UREE_YERPA</name>
<organism>
    <name type="scientific">Yersinia pestis bv. Antiqua (strain Antiqua)</name>
    <dbReference type="NCBI Taxonomy" id="360102"/>
    <lineage>
        <taxon>Bacteria</taxon>
        <taxon>Pseudomonadati</taxon>
        <taxon>Pseudomonadota</taxon>
        <taxon>Gammaproteobacteria</taxon>
        <taxon>Enterobacterales</taxon>
        <taxon>Yersiniaceae</taxon>
        <taxon>Yersinia</taxon>
    </lineage>
</organism>
<proteinExistence type="inferred from homology"/>
<feature type="chain" id="PRO_1000062568" description="Urease accessory protein UreE">
    <location>
        <begin position="1"/>
        <end position="231"/>
    </location>
</feature>
<feature type="region of interest" description="Disordered" evidence="2">
    <location>
        <begin position="185"/>
        <end position="231"/>
    </location>
</feature>
<feature type="compositionally biased region" description="Basic and acidic residues" evidence="2">
    <location>
        <begin position="203"/>
        <end position="231"/>
    </location>
</feature>
<protein>
    <recommendedName>
        <fullName evidence="1">Urease accessory protein UreE</fullName>
    </recommendedName>
</protein>
<keyword id="KW-0143">Chaperone</keyword>
<keyword id="KW-0963">Cytoplasm</keyword>
<keyword id="KW-0533">Nickel</keyword>
<keyword id="KW-0996">Nickel insertion</keyword>